<gene>
    <name evidence="8" type="primary">psiH</name>
</gene>
<reference key="1">
    <citation type="journal article" date="2017" name="Angew. Chem. Int. Ed.">
        <title>Enzymatic synthesis of psilocybin.</title>
        <authorList>
            <person name="Fricke J."/>
            <person name="Blei F."/>
            <person name="Hoffmeister D."/>
        </authorList>
    </citation>
    <scope>NUCLEOTIDE SEQUENCE [MRNA]</scope>
    <scope>IDENTIFICATION</scope>
    <scope>FUNCTION</scope>
    <scope>PATHWAY</scope>
    <source>
        <strain>FSU 12416</strain>
    </source>
</reference>
<reference key="2">
    <citation type="journal article" date="2016" name="J. Psychopharmacol.">
        <title>Rapid and sustained symptom reduction following psilocybin treatment for anxiety and depression in patients with life-threatening cancer: a randomized controlled trial.</title>
        <authorList>
            <person name="Ross S."/>
            <person name="Bossis A."/>
            <person name="Guss J."/>
            <person name="Agin-Liebes G."/>
            <person name="Malone T."/>
            <person name="Cohen B."/>
            <person name="Mennenga S.E."/>
            <person name="Belser A."/>
            <person name="Kalliontzi K."/>
            <person name="Babb J."/>
            <person name="Su Z."/>
            <person name="Corby P."/>
            <person name="Schmidt B.L."/>
        </authorList>
    </citation>
    <scope>BIOTECHNOLOGY</scope>
</reference>
<reference key="3">
    <citation type="journal article" date="2018" name="Evol. Lett.">
        <title>Horizontal gene cluster transfer increased hallucinogenic mushroom diversity.</title>
        <authorList>
            <person name="Reynolds H.T."/>
            <person name="Vijayakumar V."/>
            <person name="Gluck-Thaler E."/>
            <person name="Korotkin H.B."/>
            <person name="Matheny P.B."/>
            <person name="Slot J.C."/>
        </authorList>
    </citation>
    <scope>FUNCTION</scope>
</reference>
<name>PSIH_PSICY</name>
<dbReference type="EC" id="1.14.99.59" evidence="2"/>
<dbReference type="EMBL" id="MF000997">
    <property type="protein sequence ID" value="ASU62250.1"/>
    <property type="molecule type" value="Genomic_DNA"/>
</dbReference>
<dbReference type="SMR" id="A0A286LF02"/>
<dbReference type="GO" id="GO:0020037">
    <property type="term" value="F:heme binding"/>
    <property type="evidence" value="ECO:0007669"/>
    <property type="project" value="InterPro"/>
</dbReference>
<dbReference type="GO" id="GO:0005506">
    <property type="term" value="F:iron ion binding"/>
    <property type="evidence" value="ECO:0007669"/>
    <property type="project" value="InterPro"/>
</dbReference>
<dbReference type="GO" id="GO:0016705">
    <property type="term" value="F:oxidoreductase activity, acting on paired donors, with incorporation or reduction of molecular oxygen"/>
    <property type="evidence" value="ECO:0007669"/>
    <property type="project" value="InterPro"/>
</dbReference>
<dbReference type="GO" id="GO:0140382">
    <property type="term" value="F:tryptamine 4-monooxygenase activity"/>
    <property type="evidence" value="ECO:0007669"/>
    <property type="project" value="UniProtKB-EC"/>
</dbReference>
<dbReference type="GO" id="GO:0140380">
    <property type="term" value="P:psilocybin biosynthetic process"/>
    <property type="evidence" value="ECO:0000250"/>
    <property type="project" value="GO_Central"/>
</dbReference>
<dbReference type="CDD" id="cd11065">
    <property type="entry name" value="CYP64-like"/>
    <property type="match status" value="1"/>
</dbReference>
<dbReference type="Gene3D" id="1.10.630.10">
    <property type="entry name" value="Cytochrome P450"/>
    <property type="match status" value="1"/>
</dbReference>
<dbReference type="InterPro" id="IPR001128">
    <property type="entry name" value="Cyt_P450"/>
</dbReference>
<dbReference type="InterPro" id="IPR017972">
    <property type="entry name" value="Cyt_P450_CS"/>
</dbReference>
<dbReference type="InterPro" id="IPR002401">
    <property type="entry name" value="Cyt_P450_E_grp-I"/>
</dbReference>
<dbReference type="InterPro" id="IPR036396">
    <property type="entry name" value="Cyt_P450_sf"/>
</dbReference>
<dbReference type="InterPro" id="IPR050364">
    <property type="entry name" value="Cytochrome_P450_fung"/>
</dbReference>
<dbReference type="PANTHER" id="PTHR46300:SF7">
    <property type="entry name" value="P450, PUTATIVE (EUROFUNG)-RELATED"/>
    <property type="match status" value="1"/>
</dbReference>
<dbReference type="PANTHER" id="PTHR46300">
    <property type="entry name" value="P450, PUTATIVE (EUROFUNG)-RELATED-RELATED"/>
    <property type="match status" value="1"/>
</dbReference>
<dbReference type="Pfam" id="PF00067">
    <property type="entry name" value="p450"/>
    <property type="match status" value="1"/>
</dbReference>
<dbReference type="PRINTS" id="PR00463">
    <property type="entry name" value="EP450I"/>
</dbReference>
<dbReference type="PRINTS" id="PR00385">
    <property type="entry name" value="P450"/>
</dbReference>
<dbReference type="SUPFAM" id="SSF48264">
    <property type="entry name" value="Cytochrome P450"/>
    <property type="match status" value="1"/>
</dbReference>
<dbReference type="PROSITE" id="PS00086">
    <property type="entry name" value="CYTOCHROME_P450"/>
    <property type="match status" value="1"/>
</dbReference>
<comment type="function">
    <text evidence="2 6 7">Tryptamine 4-monooxygenase; part of the gene cluster that mediates the biosynthesis of psilocybin, a psychotropic tryptamine-derived natural product (PubMed:28763571, PubMed:30283667). The first step in the pathway is the decarboxylation of L-tryptophan to tryptamine by the decarboxylase psiD. PsiD does not decarboxylate phenylalanine, tyrosine, or 5-hydroxy- L -tryptophan (5-HTP) (PubMed:30283667). 4-hydroxy-L-tryptophan is accepted as substrate by psiD as well. The cytochrome P450 monooxygenase psiH then converts tryptamine to 4-hydroxytryptamine. The kinase psiK catalyzes the 4-O-phosphorylation step by converting 4-hydroxytryptamine into norbaeocystin. The methyltransferase psiM then catalyzes iterative methyl transfer to the amino group of norbaeocystin to yield psilocybin via a monomethylated intermediate, baeocystin (By similarity).</text>
</comment>
<comment type="catalytic activity">
    <reaction evidence="2">
        <text>tryptamine + AH2 + O2 = 4-hydroxytryptamine + A + H2O</text>
        <dbReference type="Rhea" id="RHEA:15865"/>
        <dbReference type="ChEBI" id="CHEBI:13193"/>
        <dbReference type="ChEBI" id="CHEBI:15377"/>
        <dbReference type="ChEBI" id="CHEBI:15379"/>
        <dbReference type="ChEBI" id="CHEBI:17499"/>
        <dbReference type="ChEBI" id="CHEBI:57887"/>
        <dbReference type="ChEBI" id="CHEBI:139069"/>
        <dbReference type="EC" id="1.14.99.59"/>
    </reaction>
    <physiologicalReaction direction="left-to-right" evidence="2">
        <dbReference type="Rhea" id="RHEA:15866"/>
    </physiologicalReaction>
</comment>
<comment type="cofactor">
    <cofactor evidence="1">
        <name>heme</name>
        <dbReference type="ChEBI" id="CHEBI:30413"/>
    </cofactor>
</comment>
<comment type="pathway">
    <text evidence="10">Secondary metabolite biosynthesis.</text>
</comment>
<comment type="biotechnology">
    <text evidence="5">The pharmaceutical interesting psilocybin as a treatment option against depression and anxiety is being investigated in advanced clinical trials.</text>
</comment>
<comment type="similarity">
    <text evidence="9">Belongs to the cytochrome P450 family.</text>
</comment>
<protein>
    <recommendedName>
        <fullName evidence="8">Tryptamine 4-monooxygenase</fullName>
        <ecNumber evidence="2">1.14.99.59</ecNumber>
    </recommendedName>
    <alternativeName>
        <fullName evidence="8">Cytochrome P450 monooxygenase psiH</fullName>
    </alternativeName>
    <alternativeName>
        <fullName evidence="8">Psilocybin biosynthesis hydroxylase</fullName>
    </alternativeName>
</protein>
<keyword id="KW-0349">Heme</keyword>
<keyword id="KW-0408">Iron</keyword>
<keyword id="KW-0479">Metal-binding</keyword>
<keyword id="KW-0503">Monooxygenase</keyword>
<keyword id="KW-0560">Oxidoreductase</keyword>
<keyword id="KW-0732">Signal</keyword>
<evidence type="ECO:0000250" key="1">
    <source>
        <dbReference type="UniProtKB" id="P04798"/>
    </source>
</evidence>
<evidence type="ECO:0000250" key="2">
    <source>
        <dbReference type="UniProtKB" id="P0DPA7"/>
    </source>
</evidence>
<evidence type="ECO:0000255" key="3"/>
<evidence type="ECO:0000256" key="4">
    <source>
        <dbReference type="SAM" id="MobiDB-lite"/>
    </source>
</evidence>
<evidence type="ECO:0000269" key="5">
    <source>
    </source>
</evidence>
<evidence type="ECO:0000269" key="6">
    <source>
    </source>
</evidence>
<evidence type="ECO:0000269" key="7">
    <source>
    </source>
</evidence>
<evidence type="ECO:0000303" key="8">
    <source>
    </source>
</evidence>
<evidence type="ECO:0000305" key="9"/>
<evidence type="ECO:0000305" key="10">
    <source>
    </source>
</evidence>
<accession>A0A286LF02</accession>
<sequence length="507" mass="57259">MIVLLVSLVLAGCIYYANARRVRRSRLPPGPPGIPLPFIGNMFDMPSESPWLRFLQWGRDYHTDILYLNAGGTEIIILNTLDAITDLLEKRGSMYSGRLESTMVNELMGWEFDLGFITYGERWREERRMFAKEFSEKNIRQFRHAQIKAANQLVRQLIKTPDRWSQHIRHQIAAMSLDIGYGIDLAEDDPWIAATQLANEGLAEASVPGSFWVDSFPALKYLPSWLPGAGFKRKAKVWKEGADHMVNMPYETMKKLTVQGLARPSYASARLQAMDPDGDLEHQEHVIRNTATEVNVGGGDTTVSAVSAFILAMVKYPEVQRQVQAELDALTSKGVVPNYDEEDDSLPYLTACVKEIFRWNQIAPLAIPHRLIKDDVYRGYLIPKNALVYANSWAVLNDPEEYPNPSEFRPERYLSSDGKPDPTVRDPRKAAFGYGRRNCPGIHLAQSTVWIAGATLLSVFNIERPVDGNGKPIDIPATFTTGFFRHPEPFQCRFVPRTQEILKSVSG</sequence>
<feature type="signal peptide" evidence="3">
    <location>
        <begin position="1"/>
        <end position="19"/>
    </location>
</feature>
<feature type="chain" id="PRO_5012470929" description="Tryptamine 4-monooxygenase">
    <location>
        <begin position="20"/>
        <end position="507"/>
    </location>
</feature>
<feature type="region of interest" description="Disordered" evidence="4">
    <location>
        <begin position="403"/>
        <end position="425"/>
    </location>
</feature>
<feature type="compositionally biased region" description="Basic and acidic residues" evidence="4">
    <location>
        <begin position="408"/>
        <end position="425"/>
    </location>
</feature>
<feature type="binding site" description="axial binding residue" evidence="1">
    <location>
        <position position="439"/>
    </location>
    <ligand>
        <name>heme</name>
        <dbReference type="ChEBI" id="CHEBI:30413"/>
    </ligand>
    <ligandPart>
        <name>Fe</name>
        <dbReference type="ChEBI" id="CHEBI:18248"/>
    </ligandPart>
</feature>
<organism>
    <name type="scientific">Psilocybe cyanescens</name>
    <dbReference type="NCBI Taxonomy" id="93625"/>
    <lineage>
        <taxon>Eukaryota</taxon>
        <taxon>Fungi</taxon>
        <taxon>Dikarya</taxon>
        <taxon>Basidiomycota</taxon>
        <taxon>Agaricomycotina</taxon>
        <taxon>Agaricomycetes</taxon>
        <taxon>Agaricomycetidae</taxon>
        <taxon>Agaricales</taxon>
        <taxon>Agaricineae</taxon>
        <taxon>Strophariaceae</taxon>
        <taxon>Psilocybe</taxon>
    </lineage>
</organism>
<proteinExistence type="evidence at protein level"/>